<comment type="similarity">
    <text evidence="1">Belongs to the UPF0225 family.</text>
</comment>
<name>YCHJ_SALTY</name>
<keyword id="KW-0002">3D-structure</keyword>
<keyword id="KW-1185">Reference proteome</keyword>
<feature type="chain" id="PRO_0000071813" description="UPF0225 protein YchJ">
    <location>
        <begin position="1"/>
        <end position="152"/>
    </location>
</feature>
<proteinExistence type="evidence at protein level"/>
<accession>Q8ZP43</accession>
<gene>
    <name type="primary">ychJ</name>
    <name type="ordered locus">STM1755</name>
</gene>
<reference key="1">
    <citation type="journal article" date="2001" name="Nature">
        <title>Complete genome sequence of Salmonella enterica serovar Typhimurium LT2.</title>
        <authorList>
            <person name="McClelland M."/>
            <person name="Sanderson K.E."/>
            <person name="Spieth J."/>
            <person name="Clifton S.W."/>
            <person name="Latreille P."/>
            <person name="Courtney L."/>
            <person name="Porwollik S."/>
            <person name="Ali J."/>
            <person name="Dante M."/>
            <person name="Du F."/>
            <person name="Hou S."/>
            <person name="Layman D."/>
            <person name="Leonard S."/>
            <person name="Nguyen C."/>
            <person name="Scott K."/>
            <person name="Holmes A."/>
            <person name="Grewal N."/>
            <person name="Mulvaney E."/>
            <person name="Ryan E."/>
            <person name="Sun H."/>
            <person name="Florea L."/>
            <person name="Miller W."/>
            <person name="Stoneking T."/>
            <person name="Nhan M."/>
            <person name="Waterston R."/>
            <person name="Wilson R.K."/>
        </authorList>
    </citation>
    <scope>NUCLEOTIDE SEQUENCE [LARGE SCALE GENOMIC DNA]</scope>
    <source>
        <strain>LT2 / SGSC1412 / ATCC 700720</strain>
    </source>
</reference>
<protein>
    <recommendedName>
        <fullName>UPF0225 protein YchJ</fullName>
    </recommendedName>
</protein>
<organism>
    <name type="scientific">Salmonella typhimurium (strain LT2 / SGSC1412 / ATCC 700720)</name>
    <dbReference type="NCBI Taxonomy" id="99287"/>
    <lineage>
        <taxon>Bacteria</taxon>
        <taxon>Pseudomonadati</taxon>
        <taxon>Pseudomonadota</taxon>
        <taxon>Gammaproteobacteria</taxon>
        <taxon>Enterobacterales</taxon>
        <taxon>Enterobacteriaceae</taxon>
        <taxon>Salmonella</taxon>
    </lineage>
</organism>
<evidence type="ECO:0000305" key="1"/>
<sequence>MSQPCPCGSADEYSLCCGRIVSGERVAPDPSHLMRSRYCAFVMKDADYLIKSWHPTCNAAAFRDDIIAGFANTRWLGLTIFEHTWSEAENTGYVSFIARFSEQGKNGAIIERSRFIKENGQWYYIDGTRPQLGRNDPCPCGSGKKFKKCCGQ</sequence>
<dbReference type="EMBL" id="AE006468">
    <property type="protein sequence ID" value="AAL20673.1"/>
    <property type="molecule type" value="Genomic_DNA"/>
</dbReference>
<dbReference type="RefSeq" id="NP_460714.1">
    <property type="nucleotide sequence ID" value="NC_003197.2"/>
</dbReference>
<dbReference type="RefSeq" id="WP_001682412.1">
    <property type="nucleotide sequence ID" value="NC_003197.2"/>
</dbReference>
<dbReference type="PDB" id="9L6B">
    <property type="method" value="X-ray"/>
    <property type="resolution" value="2.30 A"/>
    <property type="chains" value="B=61-120"/>
</dbReference>
<dbReference type="PDBsum" id="9L6B"/>
<dbReference type="SMR" id="Q8ZP43"/>
<dbReference type="STRING" id="99287.STM1755"/>
<dbReference type="PaxDb" id="99287-STM1755"/>
<dbReference type="GeneID" id="1253274"/>
<dbReference type="KEGG" id="stm:STM1755"/>
<dbReference type="PATRIC" id="fig|99287.12.peg.1851"/>
<dbReference type="HOGENOM" id="CLU_099590_0_0_6"/>
<dbReference type="OMA" id="WLYVDGD"/>
<dbReference type="PhylomeDB" id="Q8ZP43"/>
<dbReference type="BioCyc" id="SENT99287:STM1755-MONOMER"/>
<dbReference type="Proteomes" id="UP000001014">
    <property type="component" value="Chromosome"/>
</dbReference>
<dbReference type="Gene3D" id="3.10.450.50">
    <property type="match status" value="1"/>
</dbReference>
<dbReference type="HAMAP" id="MF_00612">
    <property type="entry name" value="UPF0225"/>
    <property type="match status" value="1"/>
</dbReference>
<dbReference type="InterPro" id="IPR032710">
    <property type="entry name" value="NTF2-like_dom_sf"/>
</dbReference>
<dbReference type="InterPro" id="IPR004027">
    <property type="entry name" value="SEC_C_motif"/>
</dbReference>
<dbReference type="InterPro" id="IPR023006">
    <property type="entry name" value="UPF0225"/>
</dbReference>
<dbReference type="InterPro" id="IPR048469">
    <property type="entry name" value="YchJ-like_M"/>
</dbReference>
<dbReference type="NCBIfam" id="NF002449">
    <property type="entry name" value="PRK01617.1"/>
    <property type="match status" value="1"/>
</dbReference>
<dbReference type="NCBIfam" id="NF002486">
    <property type="entry name" value="PRK01752.1"/>
    <property type="match status" value="1"/>
</dbReference>
<dbReference type="PANTHER" id="PTHR33747:SF1">
    <property type="entry name" value="ADENYLATE CYCLASE-ASSOCIATED CAP C-TERMINAL DOMAIN-CONTAINING PROTEIN"/>
    <property type="match status" value="1"/>
</dbReference>
<dbReference type="PANTHER" id="PTHR33747">
    <property type="entry name" value="UPF0225 PROTEIN SCO1677"/>
    <property type="match status" value="1"/>
</dbReference>
<dbReference type="Pfam" id="PF02810">
    <property type="entry name" value="SEC-C"/>
    <property type="match status" value="2"/>
</dbReference>
<dbReference type="Pfam" id="PF17775">
    <property type="entry name" value="YchJ_M-like"/>
    <property type="match status" value="1"/>
</dbReference>
<dbReference type="SUPFAM" id="SSF54427">
    <property type="entry name" value="NTF2-like"/>
    <property type="match status" value="1"/>
</dbReference>
<dbReference type="SUPFAM" id="SSF103642">
    <property type="entry name" value="Sec-C motif"/>
    <property type="match status" value="1"/>
</dbReference>